<protein>
    <recommendedName>
        <fullName>Probable plastid-lipid-associated protein 10, chloroplastic</fullName>
    </recommendedName>
    <alternativeName>
        <fullName>Fibrillin-8</fullName>
    </alternativeName>
</protein>
<accession>Q8W4F1</accession>
<accession>Q8LDY4</accession>
<dbReference type="EMBL" id="AC004411">
    <property type="protein sequence ID" value="AAC34229.2"/>
    <property type="molecule type" value="Genomic_DNA"/>
</dbReference>
<dbReference type="EMBL" id="CP002685">
    <property type="protein sequence ID" value="AEC10770.1"/>
    <property type="molecule type" value="Genomic_DNA"/>
</dbReference>
<dbReference type="EMBL" id="AY062597">
    <property type="protein sequence ID" value="AAL32675.1"/>
    <property type="molecule type" value="mRNA"/>
</dbReference>
<dbReference type="EMBL" id="AY093345">
    <property type="protein sequence ID" value="AAM13344.1"/>
    <property type="molecule type" value="mRNA"/>
</dbReference>
<dbReference type="EMBL" id="AY085727">
    <property type="protein sequence ID" value="AAM62945.1"/>
    <property type="molecule type" value="mRNA"/>
</dbReference>
<dbReference type="RefSeq" id="NP_566091.1">
    <property type="nucleotide sequence ID" value="NM_130259.2"/>
</dbReference>
<dbReference type="SMR" id="Q8W4F1"/>
<dbReference type="FunCoup" id="Q8W4F1">
    <property type="interactions" value="968"/>
</dbReference>
<dbReference type="STRING" id="3702.Q8W4F1"/>
<dbReference type="PaxDb" id="3702-AT2G46910.1"/>
<dbReference type="ProteomicsDB" id="236659"/>
<dbReference type="EnsemblPlants" id="AT2G46910.1">
    <property type="protein sequence ID" value="AT2G46910.1"/>
    <property type="gene ID" value="AT2G46910"/>
</dbReference>
<dbReference type="GeneID" id="819304"/>
<dbReference type="Gramene" id="AT2G46910.1">
    <property type="protein sequence ID" value="AT2G46910.1"/>
    <property type="gene ID" value="AT2G46910"/>
</dbReference>
<dbReference type="KEGG" id="ath:AT2G46910"/>
<dbReference type="Araport" id="AT2G46910"/>
<dbReference type="TAIR" id="AT2G46910"/>
<dbReference type="eggNOG" id="ENOG502QRYX">
    <property type="taxonomic scope" value="Eukaryota"/>
</dbReference>
<dbReference type="HOGENOM" id="CLU_052102_0_1_1"/>
<dbReference type="InParanoid" id="Q8W4F1"/>
<dbReference type="OMA" id="FQKFECQ"/>
<dbReference type="OrthoDB" id="550273at2759"/>
<dbReference type="PhylomeDB" id="Q8W4F1"/>
<dbReference type="PRO" id="PR:Q8W4F1"/>
<dbReference type="Proteomes" id="UP000006548">
    <property type="component" value="Chromosome 2"/>
</dbReference>
<dbReference type="ExpressionAtlas" id="Q8W4F1">
    <property type="expression patterns" value="baseline and differential"/>
</dbReference>
<dbReference type="GO" id="GO:0009507">
    <property type="term" value="C:chloroplast"/>
    <property type="evidence" value="ECO:0007005"/>
    <property type="project" value="TAIR"/>
</dbReference>
<dbReference type="GO" id="GO:0005829">
    <property type="term" value="C:cytosol"/>
    <property type="evidence" value="ECO:0007005"/>
    <property type="project" value="TAIR"/>
</dbReference>
<dbReference type="GO" id="GO:0010287">
    <property type="term" value="C:plastoglobule"/>
    <property type="evidence" value="ECO:0007005"/>
    <property type="project" value="TAIR"/>
</dbReference>
<dbReference type="InterPro" id="IPR039633">
    <property type="entry name" value="PAP"/>
</dbReference>
<dbReference type="InterPro" id="IPR006843">
    <property type="entry name" value="PAP/fibrillin_dom"/>
</dbReference>
<dbReference type="PANTHER" id="PTHR31906">
    <property type="entry name" value="PLASTID-LIPID-ASSOCIATED PROTEIN 4, CHLOROPLASTIC-RELATED"/>
    <property type="match status" value="1"/>
</dbReference>
<dbReference type="Pfam" id="PF04755">
    <property type="entry name" value="PAP_fibrillin"/>
    <property type="match status" value="1"/>
</dbReference>
<organism>
    <name type="scientific">Arabidopsis thaliana</name>
    <name type="common">Mouse-ear cress</name>
    <dbReference type="NCBI Taxonomy" id="3702"/>
    <lineage>
        <taxon>Eukaryota</taxon>
        <taxon>Viridiplantae</taxon>
        <taxon>Streptophyta</taxon>
        <taxon>Embryophyta</taxon>
        <taxon>Tracheophyta</taxon>
        <taxon>Spermatophyta</taxon>
        <taxon>Magnoliopsida</taxon>
        <taxon>eudicotyledons</taxon>
        <taxon>Gunneridae</taxon>
        <taxon>Pentapetalae</taxon>
        <taxon>rosids</taxon>
        <taxon>malvids</taxon>
        <taxon>Brassicales</taxon>
        <taxon>Brassicaceae</taxon>
        <taxon>Camelineae</taxon>
        <taxon>Arabidopsis</taxon>
    </lineage>
</organism>
<keyword id="KW-0150">Chloroplast</keyword>
<keyword id="KW-0934">Plastid</keyword>
<keyword id="KW-1185">Reference proteome</keyword>
<keyword id="KW-0809">Transit peptide</keyword>
<comment type="subcellular location">
    <subcellularLocation>
        <location evidence="2 3">Plastid</location>
        <location evidence="2 3">Chloroplast</location>
        <location evidence="2 3">Plastoglobule</location>
    </subcellularLocation>
</comment>
<comment type="similarity">
    <text evidence="4">Belongs to the PAP/fibrillin family.</text>
</comment>
<gene>
    <name type="primary">PAP10</name>
    <name type="synonym">FBN8</name>
    <name type="synonym">FIB8</name>
    <name type="ordered locus">At2g46910</name>
    <name type="ORF">F14M4.26</name>
</gene>
<evidence type="ECO:0000255" key="1"/>
<evidence type="ECO:0000269" key="2">
    <source>
    </source>
</evidence>
<evidence type="ECO:0000269" key="3">
    <source>
    </source>
</evidence>
<evidence type="ECO:0000305" key="4"/>
<proteinExistence type="evidence at protein level"/>
<reference key="1">
    <citation type="journal article" date="1999" name="Nature">
        <title>Sequence and analysis of chromosome 2 of the plant Arabidopsis thaliana.</title>
        <authorList>
            <person name="Lin X."/>
            <person name="Kaul S."/>
            <person name="Rounsley S.D."/>
            <person name="Shea T.P."/>
            <person name="Benito M.-I."/>
            <person name="Town C.D."/>
            <person name="Fujii C.Y."/>
            <person name="Mason T.M."/>
            <person name="Bowman C.L."/>
            <person name="Barnstead M.E."/>
            <person name="Feldblyum T.V."/>
            <person name="Buell C.R."/>
            <person name="Ketchum K.A."/>
            <person name="Lee J.J."/>
            <person name="Ronning C.M."/>
            <person name="Koo H.L."/>
            <person name="Moffat K.S."/>
            <person name="Cronin L.A."/>
            <person name="Shen M."/>
            <person name="Pai G."/>
            <person name="Van Aken S."/>
            <person name="Umayam L."/>
            <person name="Tallon L.J."/>
            <person name="Gill J.E."/>
            <person name="Adams M.D."/>
            <person name="Carrera A.J."/>
            <person name="Creasy T.H."/>
            <person name="Goodman H.M."/>
            <person name="Somerville C.R."/>
            <person name="Copenhaver G.P."/>
            <person name="Preuss D."/>
            <person name="Nierman W.C."/>
            <person name="White O."/>
            <person name="Eisen J.A."/>
            <person name="Salzberg S.L."/>
            <person name="Fraser C.M."/>
            <person name="Venter J.C."/>
        </authorList>
    </citation>
    <scope>NUCLEOTIDE SEQUENCE [LARGE SCALE GENOMIC DNA]</scope>
    <source>
        <strain>cv. Columbia</strain>
    </source>
</reference>
<reference key="2">
    <citation type="journal article" date="2017" name="Plant J.">
        <title>Araport11: a complete reannotation of the Arabidopsis thaliana reference genome.</title>
        <authorList>
            <person name="Cheng C.Y."/>
            <person name="Krishnakumar V."/>
            <person name="Chan A.P."/>
            <person name="Thibaud-Nissen F."/>
            <person name="Schobel S."/>
            <person name="Town C.D."/>
        </authorList>
    </citation>
    <scope>GENOME REANNOTATION</scope>
    <source>
        <strain>cv. Columbia</strain>
    </source>
</reference>
<reference key="3">
    <citation type="journal article" date="2003" name="Science">
        <title>Empirical analysis of transcriptional activity in the Arabidopsis genome.</title>
        <authorList>
            <person name="Yamada K."/>
            <person name="Lim J."/>
            <person name="Dale J.M."/>
            <person name="Chen H."/>
            <person name="Shinn P."/>
            <person name="Palm C.J."/>
            <person name="Southwick A.M."/>
            <person name="Wu H.C."/>
            <person name="Kim C.J."/>
            <person name="Nguyen M."/>
            <person name="Pham P.K."/>
            <person name="Cheuk R.F."/>
            <person name="Karlin-Newmann G."/>
            <person name="Liu S.X."/>
            <person name="Lam B."/>
            <person name="Sakano H."/>
            <person name="Wu T."/>
            <person name="Yu G."/>
            <person name="Miranda M."/>
            <person name="Quach H.L."/>
            <person name="Tripp M."/>
            <person name="Chang C.H."/>
            <person name="Lee J.M."/>
            <person name="Toriumi M.J."/>
            <person name="Chan M.M."/>
            <person name="Tang C.C."/>
            <person name="Onodera C.S."/>
            <person name="Deng J.M."/>
            <person name="Akiyama K."/>
            <person name="Ansari Y."/>
            <person name="Arakawa T."/>
            <person name="Banh J."/>
            <person name="Banno F."/>
            <person name="Bowser L."/>
            <person name="Brooks S.Y."/>
            <person name="Carninci P."/>
            <person name="Chao Q."/>
            <person name="Choy N."/>
            <person name="Enju A."/>
            <person name="Goldsmith A.D."/>
            <person name="Gurjal M."/>
            <person name="Hansen N.F."/>
            <person name="Hayashizaki Y."/>
            <person name="Johnson-Hopson C."/>
            <person name="Hsuan V.W."/>
            <person name="Iida K."/>
            <person name="Karnes M."/>
            <person name="Khan S."/>
            <person name="Koesema E."/>
            <person name="Ishida J."/>
            <person name="Jiang P.X."/>
            <person name="Jones T."/>
            <person name="Kawai J."/>
            <person name="Kamiya A."/>
            <person name="Meyers C."/>
            <person name="Nakajima M."/>
            <person name="Narusaka M."/>
            <person name="Seki M."/>
            <person name="Sakurai T."/>
            <person name="Satou M."/>
            <person name="Tamse R."/>
            <person name="Vaysberg M."/>
            <person name="Wallender E.K."/>
            <person name="Wong C."/>
            <person name="Yamamura Y."/>
            <person name="Yuan S."/>
            <person name="Shinozaki K."/>
            <person name="Davis R.W."/>
            <person name="Theologis A."/>
            <person name="Ecker J.R."/>
        </authorList>
    </citation>
    <scope>NUCLEOTIDE SEQUENCE [LARGE SCALE MRNA]</scope>
    <source>
        <strain>cv. Columbia</strain>
    </source>
</reference>
<reference key="4">
    <citation type="submission" date="2002-03" db="EMBL/GenBank/DDBJ databases">
        <title>Full-length cDNA from Arabidopsis thaliana.</title>
        <authorList>
            <person name="Brover V.V."/>
            <person name="Troukhan M.E."/>
            <person name="Alexandrov N.A."/>
            <person name="Lu Y.-P."/>
            <person name="Flavell R.B."/>
            <person name="Feldmann K.A."/>
        </authorList>
    </citation>
    <scope>NUCLEOTIDE SEQUENCE [LARGE SCALE MRNA]</scope>
</reference>
<reference key="5">
    <citation type="journal article" date="2006" name="Plant Physiol.">
        <title>Protein profiling of plastoglobules in chloroplasts and chromoplasts. A surprising site for differential accumulation of metabolic enzymes.</title>
        <authorList>
            <person name="Ytterberg A.J."/>
            <person name="Peltier J.-B."/>
            <person name="van Wijk K.J."/>
        </authorList>
    </citation>
    <scope>IDENTIFICATION BY MASS SPECTROMETRY</scope>
    <scope>SUBCELLULAR LOCATION [LARGE SCALE ANALYSIS]</scope>
    <source>
        <strain>cv. Columbia</strain>
    </source>
</reference>
<reference key="6">
    <citation type="journal article" date="2011" name="Trends Plant Sci.">
        <title>Fibrillin protein function: the tip of the iceberg?</title>
        <authorList>
            <person name="Singh D.K."/>
            <person name="McNellis T.W."/>
        </authorList>
    </citation>
    <scope>GENE FAMILY</scope>
    <scope>NOMENCLATURE</scope>
</reference>
<reference key="7">
    <citation type="journal article" date="2012" name="Plant Physiol.">
        <title>The functional network of the Arabidopsis plastoglobule proteome based on quantitative proteomics and genome-wide coexpression analysis.</title>
        <authorList>
            <person name="Lundquist P.K."/>
            <person name="Poliakov A."/>
            <person name="Bhuiyan N.H."/>
            <person name="Zybailov B."/>
            <person name="Sun Q."/>
            <person name="van Wijk K.J."/>
        </authorList>
    </citation>
    <scope>IDENTIFICATION BY MASS SPECTROMETRY</scope>
    <scope>SUBCELLULAR LOCATION [LARGE SCALE ANALYSIS]</scope>
    <source>
        <strain>cv. Columbia</strain>
    </source>
</reference>
<sequence>MDRIASATFSCPAISLSRVCRISPFGLNIKTNHRKRFSCRVAVASGETSARVVVDNELDLEHKKHDLLRAVQDTQRGLTATSDQRSIIEEALVTVEGFNGGEEIDPVKLDGTWRLQYTSAPDVVVLFEAASRLPFFQVGQVFQKFECRDRSDGGIIRNVVQWSLPSLLEEQEGATLVVTAKFDKVSSRNIYLQFEEISVRNININEQLQALIAPAILPRSFLSLQLLQFIRTFKAQIPVNATSPGRRSVGGLYYLSYLDNNMLLGRSVGGGGVFVFTKSQPLEL</sequence>
<feature type="transit peptide" description="Chloroplast" evidence="1">
    <location>
        <begin position="1"/>
        <end position="40"/>
    </location>
</feature>
<feature type="chain" id="PRO_0000286535" description="Probable plastid-lipid-associated protein 10, chloroplastic">
    <location>
        <begin position="41"/>
        <end position="284"/>
    </location>
</feature>
<feature type="sequence conflict" description="In Ref. 4; AAM62945." evidence="4" ref="4">
    <original>R</original>
    <variation>L</variation>
    <location>
        <position position="3"/>
    </location>
</feature>
<name>PAP10_ARATH</name>